<evidence type="ECO:0000250" key="1"/>
<evidence type="ECO:0000250" key="2">
    <source>
        <dbReference type="UniProtKB" id="Q921L8"/>
    </source>
</evidence>
<evidence type="ECO:0000255" key="3"/>
<evidence type="ECO:0000255" key="4">
    <source>
        <dbReference type="PROSITE-ProRule" id="PRU00174"/>
    </source>
</evidence>
<evidence type="ECO:0000305" key="5"/>
<name>GLT11_RAT</name>
<gene>
    <name type="primary">Galnt11</name>
</gene>
<feature type="chain" id="PRO_0000059127" description="Polypeptide N-acetylgalactosaminyltransferase 11">
    <location>
        <begin position="1"/>
        <end position="608"/>
    </location>
</feature>
<feature type="topological domain" description="Cytoplasmic" evidence="3">
    <location>
        <begin position="1"/>
        <end position="6"/>
    </location>
</feature>
<feature type="transmembrane region" description="Helical; Signal-anchor for type II membrane protein" evidence="3">
    <location>
        <begin position="7"/>
        <end position="29"/>
    </location>
</feature>
<feature type="topological domain" description="Lumenal" evidence="3">
    <location>
        <begin position="30"/>
        <end position="608"/>
    </location>
</feature>
<feature type="domain" description="Ricin B-type lectin" evidence="4">
    <location>
        <begin position="476"/>
        <end position="607"/>
    </location>
</feature>
<feature type="region of interest" description="Catalytic subdomain A">
    <location>
        <begin position="150"/>
        <end position="261"/>
    </location>
</feature>
<feature type="region of interest" description="Catalytic subdomain B">
    <location>
        <begin position="319"/>
        <end position="381"/>
    </location>
</feature>
<feature type="binding site" evidence="1">
    <location>
        <position position="191"/>
    </location>
    <ligand>
        <name>substrate</name>
    </ligand>
</feature>
<feature type="binding site" evidence="1">
    <location>
        <position position="222"/>
    </location>
    <ligand>
        <name>substrate</name>
    </ligand>
</feature>
<feature type="binding site" evidence="1">
    <location>
        <position position="245"/>
    </location>
    <ligand>
        <name>Mn(2+)</name>
        <dbReference type="ChEBI" id="CHEBI:29035"/>
    </ligand>
</feature>
<feature type="binding site" evidence="1">
    <location>
        <position position="246"/>
    </location>
    <ligand>
        <name>substrate</name>
    </ligand>
</feature>
<feature type="binding site" evidence="1">
    <location>
        <position position="247"/>
    </location>
    <ligand>
        <name>Mn(2+)</name>
        <dbReference type="ChEBI" id="CHEBI:29035"/>
    </ligand>
</feature>
<feature type="binding site" evidence="1">
    <location>
        <position position="350"/>
    </location>
    <ligand>
        <name>substrate</name>
    </ligand>
</feature>
<feature type="binding site" evidence="1">
    <location>
        <position position="378"/>
    </location>
    <ligand>
        <name>Mn(2+)</name>
        <dbReference type="ChEBI" id="CHEBI:29035"/>
    </ligand>
</feature>
<feature type="binding site" evidence="1">
    <location>
        <position position="381"/>
    </location>
    <ligand>
        <name>substrate</name>
    </ligand>
</feature>
<feature type="binding site" evidence="1">
    <location>
        <position position="386"/>
    </location>
    <ligand>
        <name>substrate</name>
    </ligand>
</feature>
<feature type="modified residue" description="Phosphoserine" evidence="2">
    <location>
        <position position="95"/>
    </location>
</feature>
<feature type="glycosylation site" description="N-linked (GlcNAc...) asparagine" evidence="3">
    <location>
        <position position="428"/>
    </location>
</feature>
<feature type="disulfide bond" evidence="4">
    <location>
        <begin position="141"/>
        <end position="373"/>
    </location>
</feature>
<feature type="disulfide bond" evidence="4">
    <location>
        <begin position="364"/>
        <end position="441"/>
    </location>
</feature>
<feature type="disulfide bond" evidence="4">
    <location>
        <begin position="493"/>
        <end position="512"/>
    </location>
</feature>
<feature type="disulfide bond" evidence="4">
    <location>
        <begin position="536"/>
        <end position="553"/>
    </location>
</feature>
<feature type="disulfide bond" evidence="4">
    <location>
        <begin position="578"/>
        <end position="596"/>
    </location>
</feature>
<dbReference type="EC" id="2.4.1.41"/>
<dbReference type="EMBL" id="BC062004">
    <property type="protein sequence ID" value="AAH62004.1"/>
    <property type="molecule type" value="mRNA"/>
</dbReference>
<dbReference type="RefSeq" id="NP_955425.2">
    <property type="nucleotide sequence ID" value="NM_199393.2"/>
</dbReference>
<dbReference type="SMR" id="Q6P6V1"/>
<dbReference type="FunCoup" id="Q6P6V1">
    <property type="interactions" value="900"/>
</dbReference>
<dbReference type="STRING" id="10116.ENSRNOP00000011815"/>
<dbReference type="CAZy" id="CBM13">
    <property type="family name" value="Carbohydrate-Binding Module Family 13"/>
</dbReference>
<dbReference type="CAZy" id="GT27">
    <property type="family name" value="Glycosyltransferase Family 27"/>
</dbReference>
<dbReference type="GlyCosmos" id="Q6P6V1">
    <property type="glycosylation" value="1 site, No reported glycans"/>
</dbReference>
<dbReference type="GlyGen" id="Q6P6V1">
    <property type="glycosylation" value="1 site"/>
</dbReference>
<dbReference type="PhosphoSitePlus" id="Q6P6V1"/>
<dbReference type="PaxDb" id="10116-ENSRNOP00000011815"/>
<dbReference type="GeneID" id="311952"/>
<dbReference type="KEGG" id="rno:311952"/>
<dbReference type="AGR" id="RGD:735097"/>
<dbReference type="CTD" id="63917"/>
<dbReference type="RGD" id="735097">
    <property type="gene designation" value="Galnt11"/>
</dbReference>
<dbReference type="eggNOG" id="KOG3736">
    <property type="taxonomic scope" value="Eukaryota"/>
</dbReference>
<dbReference type="HOGENOM" id="CLU_013477_0_1_1"/>
<dbReference type="InParanoid" id="Q6P6V1"/>
<dbReference type="OMA" id="PVFQPWH"/>
<dbReference type="OrthoDB" id="5988548at2759"/>
<dbReference type="PhylomeDB" id="Q6P6V1"/>
<dbReference type="TreeFam" id="TF313267"/>
<dbReference type="Reactome" id="R-RNO-913709">
    <property type="pathway name" value="O-linked glycosylation of mucins"/>
</dbReference>
<dbReference type="UniPathway" id="UPA00378"/>
<dbReference type="PRO" id="PR:Q6P6V1"/>
<dbReference type="Proteomes" id="UP000002494">
    <property type="component" value="Unplaced"/>
</dbReference>
<dbReference type="GO" id="GO:0005794">
    <property type="term" value="C:Golgi apparatus"/>
    <property type="evidence" value="ECO:0000318"/>
    <property type="project" value="GO_Central"/>
</dbReference>
<dbReference type="GO" id="GO:0000139">
    <property type="term" value="C:Golgi membrane"/>
    <property type="evidence" value="ECO:0007669"/>
    <property type="project" value="UniProtKB-SubCell"/>
</dbReference>
<dbReference type="GO" id="GO:0030246">
    <property type="term" value="F:carbohydrate binding"/>
    <property type="evidence" value="ECO:0007669"/>
    <property type="project" value="UniProtKB-KW"/>
</dbReference>
<dbReference type="GO" id="GO:0046872">
    <property type="term" value="F:metal ion binding"/>
    <property type="evidence" value="ECO:0007669"/>
    <property type="project" value="UniProtKB-KW"/>
</dbReference>
<dbReference type="GO" id="GO:0005112">
    <property type="term" value="F:Notch binding"/>
    <property type="evidence" value="ECO:0000250"/>
    <property type="project" value="UniProtKB"/>
</dbReference>
<dbReference type="GO" id="GO:0004653">
    <property type="term" value="F:polypeptide N-acetylgalactosaminyltransferase activity"/>
    <property type="evidence" value="ECO:0000250"/>
    <property type="project" value="UniProtKB"/>
</dbReference>
<dbReference type="GO" id="GO:0060271">
    <property type="term" value="P:cilium assembly"/>
    <property type="evidence" value="ECO:0000250"/>
    <property type="project" value="UniProtKB"/>
</dbReference>
<dbReference type="GO" id="GO:0007368">
    <property type="term" value="P:determination of left/right symmetry"/>
    <property type="evidence" value="ECO:0000250"/>
    <property type="project" value="UniProtKB"/>
</dbReference>
<dbReference type="GO" id="GO:0007220">
    <property type="term" value="P:Notch receptor processing"/>
    <property type="evidence" value="ECO:0000250"/>
    <property type="project" value="UniProtKB"/>
</dbReference>
<dbReference type="GO" id="GO:0061314">
    <property type="term" value="P:Notch signaling involved in heart development"/>
    <property type="evidence" value="ECO:0000250"/>
    <property type="project" value="UniProtKB"/>
</dbReference>
<dbReference type="GO" id="GO:0006493">
    <property type="term" value="P:protein O-linked glycosylation"/>
    <property type="evidence" value="ECO:0000318"/>
    <property type="project" value="GO_Central"/>
</dbReference>
<dbReference type="GO" id="GO:0018243">
    <property type="term" value="P:protein O-linked glycosylation via threonine"/>
    <property type="evidence" value="ECO:0000250"/>
    <property type="project" value="UniProtKB"/>
</dbReference>
<dbReference type="GO" id="GO:0008593">
    <property type="term" value="P:regulation of Notch signaling pathway"/>
    <property type="evidence" value="ECO:0000250"/>
    <property type="project" value="UniProtKB"/>
</dbReference>
<dbReference type="CDD" id="cd23440">
    <property type="entry name" value="beta-trefoil_Ricin_GALNT11"/>
    <property type="match status" value="1"/>
</dbReference>
<dbReference type="CDD" id="cd02510">
    <property type="entry name" value="pp-GalNAc-T"/>
    <property type="match status" value="1"/>
</dbReference>
<dbReference type="FunFam" id="2.80.10.50:FF:000029">
    <property type="entry name" value="Polypeptide N-acetylgalactosaminyltransferase"/>
    <property type="match status" value="1"/>
</dbReference>
<dbReference type="FunFam" id="3.90.550.10:FF:000053">
    <property type="entry name" value="Polypeptide N-acetylgalactosaminyltransferase"/>
    <property type="match status" value="1"/>
</dbReference>
<dbReference type="Gene3D" id="2.80.10.50">
    <property type="match status" value="1"/>
</dbReference>
<dbReference type="Gene3D" id="3.90.550.10">
    <property type="entry name" value="Spore Coat Polysaccharide Biosynthesis Protein SpsA, Chain A"/>
    <property type="match status" value="1"/>
</dbReference>
<dbReference type="InterPro" id="IPR045885">
    <property type="entry name" value="GalNAc-T"/>
</dbReference>
<dbReference type="InterPro" id="IPR001173">
    <property type="entry name" value="Glyco_trans_2-like"/>
</dbReference>
<dbReference type="InterPro" id="IPR029044">
    <property type="entry name" value="Nucleotide-diphossugar_trans"/>
</dbReference>
<dbReference type="InterPro" id="IPR035992">
    <property type="entry name" value="Ricin_B-like_lectins"/>
</dbReference>
<dbReference type="InterPro" id="IPR000772">
    <property type="entry name" value="Ricin_B_lectin"/>
</dbReference>
<dbReference type="PANTHER" id="PTHR11675">
    <property type="entry name" value="N-ACETYLGALACTOSAMINYLTRANSFERASE"/>
    <property type="match status" value="1"/>
</dbReference>
<dbReference type="PANTHER" id="PTHR11675:SF10">
    <property type="entry name" value="POLYPEPTIDE N-ACETYLGALACTOSAMINYLTRANSFERASE 11"/>
    <property type="match status" value="1"/>
</dbReference>
<dbReference type="Pfam" id="PF00535">
    <property type="entry name" value="Glycos_transf_2"/>
    <property type="match status" value="1"/>
</dbReference>
<dbReference type="Pfam" id="PF00652">
    <property type="entry name" value="Ricin_B_lectin"/>
    <property type="match status" value="1"/>
</dbReference>
<dbReference type="SMART" id="SM00458">
    <property type="entry name" value="RICIN"/>
    <property type="match status" value="1"/>
</dbReference>
<dbReference type="SUPFAM" id="SSF53448">
    <property type="entry name" value="Nucleotide-diphospho-sugar transferases"/>
    <property type="match status" value="1"/>
</dbReference>
<dbReference type="SUPFAM" id="SSF50370">
    <property type="entry name" value="Ricin B-like lectins"/>
    <property type="match status" value="1"/>
</dbReference>
<dbReference type="PROSITE" id="PS50231">
    <property type="entry name" value="RICIN_B_LECTIN"/>
    <property type="match status" value="1"/>
</dbReference>
<protein>
    <recommendedName>
        <fullName>Polypeptide N-acetylgalactosaminyltransferase 11</fullName>
        <ecNumber>2.4.1.41</ecNumber>
    </recommendedName>
    <alternativeName>
        <fullName>Polypeptide GalNAc transferase 11</fullName>
        <shortName>GalNAc-T11</shortName>
        <shortName>pp-GaNTase 11</shortName>
    </alternativeName>
    <alternativeName>
        <fullName>Protein-UDP acetylgalactosaminyltransferase 11</fullName>
    </alternativeName>
    <alternativeName>
        <fullName>UDP-GalNAc:polypeptide N-acetylgalactosaminyltransferase 11</fullName>
    </alternativeName>
</protein>
<comment type="function">
    <text evidence="1">Polypeptide N-acetylgalactosaminyltransferase that catalyzes the initiation of protein O-linked glycosylation and is involved in left/right asymmetry by mediating O-glycosylation of NOTCH1. O-glycosylation of NOTCH1 promotes activation of NOTCH1, modulating the balance between motile and immotile (sensory) cilia at the left-right organiser (LRO). Polypeptide N-acetylgalactosaminyltransferases catalyze the transfer of an N-acetyl-D-galactosamine residue to a serine or threonine residue on the protein receptor. Displays the same enzyme activity toward MUC1, MUC4, and EA2 than GALNT1. Not involved in glycosylation of erythropoietin (EPO) (By similarity).</text>
</comment>
<comment type="catalytic activity">
    <reaction>
        <text>L-seryl-[protein] + UDP-N-acetyl-alpha-D-galactosamine = a 3-O-[N-acetyl-alpha-D-galactosaminyl]-L-seryl-[protein] + UDP + H(+)</text>
        <dbReference type="Rhea" id="RHEA:23956"/>
        <dbReference type="Rhea" id="RHEA-COMP:9863"/>
        <dbReference type="Rhea" id="RHEA-COMP:12788"/>
        <dbReference type="ChEBI" id="CHEBI:15378"/>
        <dbReference type="ChEBI" id="CHEBI:29999"/>
        <dbReference type="ChEBI" id="CHEBI:53604"/>
        <dbReference type="ChEBI" id="CHEBI:58223"/>
        <dbReference type="ChEBI" id="CHEBI:67138"/>
        <dbReference type="EC" id="2.4.1.41"/>
    </reaction>
</comment>
<comment type="catalytic activity">
    <reaction>
        <text>L-threonyl-[protein] + UDP-N-acetyl-alpha-D-galactosamine = a 3-O-[N-acetyl-alpha-D-galactosaminyl]-L-threonyl-[protein] + UDP + H(+)</text>
        <dbReference type="Rhea" id="RHEA:52424"/>
        <dbReference type="Rhea" id="RHEA-COMP:11060"/>
        <dbReference type="Rhea" id="RHEA-COMP:11689"/>
        <dbReference type="ChEBI" id="CHEBI:15378"/>
        <dbReference type="ChEBI" id="CHEBI:30013"/>
        <dbReference type="ChEBI" id="CHEBI:58223"/>
        <dbReference type="ChEBI" id="CHEBI:67138"/>
        <dbReference type="ChEBI" id="CHEBI:87075"/>
        <dbReference type="EC" id="2.4.1.41"/>
    </reaction>
</comment>
<comment type="cofactor">
    <cofactor evidence="1">
        <name>Mn(2+)</name>
        <dbReference type="ChEBI" id="CHEBI:29035"/>
    </cofactor>
</comment>
<comment type="pathway">
    <text>Protein modification; protein glycosylation.</text>
</comment>
<comment type="subunit">
    <text evidence="1">Interacts with NOTCH1.</text>
</comment>
<comment type="subcellular location">
    <subcellularLocation>
        <location evidence="1">Golgi apparatus membrane</location>
        <topology evidence="1">Single-pass type II membrane protein</topology>
    </subcellularLocation>
</comment>
<comment type="domain">
    <text evidence="1">There are two conserved domains in the glycosyltransferase region: the N-terminal domain (domain A, also called GT1 motif), which is probably involved in manganese coordination and substrate binding and the C-terminal domain (domain B, also called Gal/GalNAc-T motif), which is probably involved in catalytic reaction and UDP-Gal binding.</text>
</comment>
<comment type="domain">
    <text evidence="1">The ricin B-type lectin domain binds to GalNAc and contributes to the glycopeptide specificity.</text>
</comment>
<comment type="similarity">
    <text evidence="5">Belongs to the glycosyltransferase 2 family. GalNAc-T subfamily.</text>
</comment>
<proteinExistence type="evidence at protein level"/>
<reference key="1">
    <citation type="journal article" date="2004" name="Genome Res.">
        <title>The status, quality, and expansion of the NIH full-length cDNA project: the Mammalian Gene Collection (MGC).</title>
        <authorList>
            <consortium name="The MGC Project Team"/>
        </authorList>
    </citation>
    <scope>NUCLEOTIDE SEQUENCE [LARGE SCALE MRNA]</scope>
    <source>
        <tissue>Prostate</tissue>
    </source>
</reference>
<reference key="2">
    <citation type="journal article" date="2012" name="Nat. Commun.">
        <title>Quantitative maps of protein phosphorylation sites across 14 different rat organs and tissues.</title>
        <authorList>
            <person name="Lundby A."/>
            <person name="Secher A."/>
            <person name="Lage K."/>
            <person name="Nordsborg N.B."/>
            <person name="Dmytriyev A."/>
            <person name="Lundby C."/>
            <person name="Olsen J.V."/>
        </authorList>
    </citation>
    <scope>IDENTIFICATION BY MASS SPECTROMETRY [LARGE SCALE ANALYSIS]</scope>
</reference>
<accession>Q6P6V1</accession>
<organism>
    <name type="scientific">Rattus norvegicus</name>
    <name type="common">Rat</name>
    <dbReference type="NCBI Taxonomy" id="10116"/>
    <lineage>
        <taxon>Eukaryota</taxon>
        <taxon>Metazoa</taxon>
        <taxon>Chordata</taxon>
        <taxon>Craniata</taxon>
        <taxon>Vertebrata</taxon>
        <taxon>Euteleostomi</taxon>
        <taxon>Mammalia</taxon>
        <taxon>Eutheria</taxon>
        <taxon>Euarchontoglires</taxon>
        <taxon>Glires</taxon>
        <taxon>Rodentia</taxon>
        <taxon>Myomorpha</taxon>
        <taxon>Muroidea</taxon>
        <taxon>Muridae</taxon>
        <taxon>Murinae</taxon>
        <taxon>Rattus</taxon>
    </lineage>
</organism>
<keyword id="KW-1015">Disulfide bond</keyword>
<keyword id="KW-0325">Glycoprotein</keyword>
<keyword id="KW-0328">Glycosyltransferase</keyword>
<keyword id="KW-0333">Golgi apparatus</keyword>
<keyword id="KW-0430">Lectin</keyword>
<keyword id="KW-0464">Manganese</keyword>
<keyword id="KW-0472">Membrane</keyword>
<keyword id="KW-0479">Metal-binding</keyword>
<keyword id="KW-0914">Notch signaling pathway</keyword>
<keyword id="KW-0597">Phosphoprotein</keyword>
<keyword id="KW-1185">Reference proteome</keyword>
<keyword id="KW-0735">Signal-anchor</keyword>
<keyword id="KW-0808">Transferase</keyword>
<keyword id="KW-0812">Transmembrane</keyword>
<keyword id="KW-1133">Transmembrane helix</keyword>
<sequence>MGSVTIRYFCYGCLFTSATWTVLLFIYFNFSEVTQPLRNVPIKGSGPHGPFPKKFYPRFTRGPGRVLEPQFKANRMDDLMNNNIEDPDKGLSKSSSELGMIFNERDQELRDLGYQKHAFNMLISNRLGYHRDVPDTRNAECRGKSYPTDLPTASVVICFYNEAFSALLRTVHSVVDRTPAHLLHEIILVDDSSDFDDLKGELDEYIQRYLPAKVKVIRNMKREGLIRGRMIGAAHATGEVLVFLDSHCEVNVMWLQPLLAIILEDPHTVVCPVIDIISADTLAYSSSPVVRGGFNWGLHFKWDLVPVSDLGGADSATAPIRSPTMAGGLFAMNRQYFNDLGQYDSGMDIWGGENLEISFRIWMCGGKLFIIPCSRVGHIFRKRRPYGSPEGQDTMTHNSLRLAHVWLDEYKEQYFSLRPDLKTKSFGNISERVELRKKLGCQSFKWYLDNVYPEMQVSGPKARLQQPVFINRGPKRPRVLLRGRLYHLQTNKCLVAQGRSSQKGGLVLLKACDYGDPTQVWIYNEEHELILNNLLCLDMSETRSSDPPRLMKCHGSGGSQQWTFGKNNRLYQVSVGQCLRVVDQMDQKGYVGMAICDGSSSQQWRLEG</sequence>